<dbReference type="EC" id="4.2.1.11" evidence="1"/>
<dbReference type="EMBL" id="CP000580">
    <property type="protein sequence ID" value="ABO00385.1"/>
    <property type="molecule type" value="Genomic_DNA"/>
</dbReference>
<dbReference type="SMR" id="A3Q5F7"/>
<dbReference type="KEGG" id="mjl:Mjls_4619"/>
<dbReference type="HOGENOM" id="CLU_031223_2_1_11"/>
<dbReference type="BioCyc" id="MSP164757:G1G8C-4659-MONOMER"/>
<dbReference type="UniPathway" id="UPA00109">
    <property type="reaction ID" value="UER00187"/>
</dbReference>
<dbReference type="GO" id="GO:0009986">
    <property type="term" value="C:cell surface"/>
    <property type="evidence" value="ECO:0007669"/>
    <property type="project" value="UniProtKB-SubCell"/>
</dbReference>
<dbReference type="GO" id="GO:0005576">
    <property type="term" value="C:extracellular region"/>
    <property type="evidence" value="ECO:0007669"/>
    <property type="project" value="UniProtKB-SubCell"/>
</dbReference>
<dbReference type="GO" id="GO:0000015">
    <property type="term" value="C:phosphopyruvate hydratase complex"/>
    <property type="evidence" value="ECO:0007669"/>
    <property type="project" value="InterPro"/>
</dbReference>
<dbReference type="GO" id="GO:0000287">
    <property type="term" value="F:magnesium ion binding"/>
    <property type="evidence" value="ECO:0007669"/>
    <property type="project" value="UniProtKB-UniRule"/>
</dbReference>
<dbReference type="GO" id="GO:0004634">
    <property type="term" value="F:phosphopyruvate hydratase activity"/>
    <property type="evidence" value="ECO:0007669"/>
    <property type="project" value="UniProtKB-UniRule"/>
</dbReference>
<dbReference type="GO" id="GO:0006096">
    <property type="term" value="P:glycolytic process"/>
    <property type="evidence" value="ECO:0007669"/>
    <property type="project" value="UniProtKB-UniRule"/>
</dbReference>
<dbReference type="CDD" id="cd03313">
    <property type="entry name" value="enolase"/>
    <property type="match status" value="1"/>
</dbReference>
<dbReference type="FunFam" id="3.20.20.120:FF:000001">
    <property type="entry name" value="Enolase"/>
    <property type="match status" value="1"/>
</dbReference>
<dbReference type="FunFam" id="3.30.390.10:FF:000001">
    <property type="entry name" value="Enolase"/>
    <property type="match status" value="1"/>
</dbReference>
<dbReference type="Gene3D" id="3.20.20.120">
    <property type="entry name" value="Enolase-like C-terminal domain"/>
    <property type="match status" value="1"/>
</dbReference>
<dbReference type="Gene3D" id="3.30.390.10">
    <property type="entry name" value="Enolase-like, N-terminal domain"/>
    <property type="match status" value="1"/>
</dbReference>
<dbReference type="HAMAP" id="MF_00318">
    <property type="entry name" value="Enolase"/>
    <property type="match status" value="1"/>
</dbReference>
<dbReference type="InterPro" id="IPR000941">
    <property type="entry name" value="Enolase"/>
</dbReference>
<dbReference type="InterPro" id="IPR036849">
    <property type="entry name" value="Enolase-like_C_sf"/>
</dbReference>
<dbReference type="InterPro" id="IPR029017">
    <property type="entry name" value="Enolase-like_N"/>
</dbReference>
<dbReference type="InterPro" id="IPR020810">
    <property type="entry name" value="Enolase_C"/>
</dbReference>
<dbReference type="InterPro" id="IPR020809">
    <property type="entry name" value="Enolase_CS"/>
</dbReference>
<dbReference type="InterPro" id="IPR020811">
    <property type="entry name" value="Enolase_N"/>
</dbReference>
<dbReference type="NCBIfam" id="TIGR01060">
    <property type="entry name" value="eno"/>
    <property type="match status" value="1"/>
</dbReference>
<dbReference type="PANTHER" id="PTHR11902">
    <property type="entry name" value="ENOLASE"/>
    <property type="match status" value="1"/>
</dbReference>
<dbReference type="PANTHER" id="PTHR11902:SF1">
    <property type="entry name" value="ENOLASE"/>
    <property type="match status" value="1"/>
</dbReference>
<dbReference type="Pfam" id="PF00113">
    <property type="entry name" value="Enolase_C"/>
    <property type="match status" value="1"/>
</dbReference>
<dbReference type="Pfam" id="PF03952">
    <property type="entry name" value="Enolase_N"/>
    <property type="match status" value="1"/>
</dbReference>
<dbReference type="PIRSF" id="PIRSF001400">
    <property type="entry name" value="Enolase"/>
    <property type="match status" value="1"/>
</dbReference>
<dbReference type="PRINTS" id="PR00148">
    <property type="entry name" value="ENOLASE"/>
</dbReference>
<dbReference type="SFLD" id="SFLDS00001">
    <property type="entry name" value="Enolase"/>
    <property type="match status" value="1"/>
</dbReference>
<dbReference type="SFLD" id="SFLDF00002">
    <property type="entry name" value="enolase"/>
    <property type="match status" value="1"/>
</dbReference>
<dbReference type="SMART" id="SM01192">
    <property type="entry name" value="Enolase_C"/>
    <property type="match status" value="1"/>
</dbReference>
<dbReference type="SMART" id="SM01193">
    <property type="entry name" value="Enolase_N"/>
    <property type="match status" value="1"/>
</dbReference>
<dbReference type="SUPFAM" id="SSF51604">
    <property type="entry name" value="Enolase C-terminal domain-like"/>
    <property type="match status" value="1"/>
</dbReference>
<dbReference type="SUPFAM" id="SSF54826">
    <property type="entry name" value="Enolase N-terminal domain-like"/>
    <property type="match status" value="1"/>
</dbReference>
<dbReference type="PROSITE" id="PS00164">
    <property type="entry name" value="ENOLASE"/>
    <property type="match status" value="1"/>
</dbReference>
<organism>
    <name type="scientific">Mycobacterium sp. (strain JLS)</name>
    <dbReference type="NCBI Taxonomy" id="164757"/>
    <lineage>
        <taxon>Bacteria</taxon>
        <taxon>Bacillati</taxon>
        <taxon>Actinomycetota</taxon>
        <taxon>Actinomycetes</taxon>
        <taxon>Mycobacteriales</taxon>
        <taxon>Mycobacteriaceae</taxon>
        <taxon>Mycobacterium</taxon>
    </lineage>
</organism>
<name>ENO_MYCSJ</name>
<feature type="chain" id="PRO_1000019223" description="Enolase">
    <location>
        <begin position="1"/>
        <end position="429"/>
    </location>
</feature>
<feature type="active site" description="Proton donor" evidence="1">
    <location>
        <position position="204"/>
    </location>
</feature>
<feature type="active site" description="Proton acceptor" evidence="1">
    <location>
        <position position="335"/>
    </location>
</feature>
<feature type="binding site" evidence="1">
    <location>
        <position position="162"/>
    </location>
    <ligand>
        <name>(2R)-2-phosphoglycerate</name>
        <dbReference type="ChEBI" id="CHEBI:58289"/>
    </ligand>
</feature>
<feature type="binding site" evidence="1">
    <location>
        <position position="241"/>
    </location>
    <ligand>
        <name>Mg(2+)</name>
        <dbReference type="ChEBI" id="CHEBI:18420"/>
    </ligand>
</feature>
<feature type="binding site" evidence="1">
    <location>
        <position position="283"/>
    </location>
    <ligand>
        <name>Mg(2+)</name>
        <dbReference type="ChEBI" id="CHEBI:18420"/>
    </ligand>
</feature>
<feature type="binding site" evidence="1">
    <location>
        <position position="310"/>
    </location>
    <ligand>
        <name>Mg(2+)</name>
        <dbReference type="ChEBI" id="CHEBI:18420"/>
    </ligand>
</feature>
<feature type="binding site" evidence="1">
    <location>
        <position position="335"/>
    </location>
    <ligand>
        <name>(2R)-2-phosphoglycerate</name>
        <dbReference type="ChEBI" id="CHEBI:58289"/>
    </ligand>
</feature>
<feature type="binding site" evidence="1">
    <location>
        <position position="364"/>
    </location>
    <ligand>
        <name>(2R)-2-phosphoglycerate</name>
        <dbReference type="ChEBI" id="CHEBI:58289"/>
    </ligand>
</feature>
<feature type="binding site" evidence="1">
    <location>
        <position position="365"/>
    </location>
    <ligand>
        <name>(2R)-2-phosphoglycerate</name>
        <dbReference type="ChEBI" id="CHEBI:58289"/>
    </ligand>
</feature>
<feature type="binding site" evidence="1">
    <location>
        <position position="386"/>
    </location>
    <ligand>
        <name>(2R)-2-phosphoglycerate</name>
        <dbReference type="ChEBI" id="CHEBI:58289"/>
    </ligand>
</feature>
<proteinExistence type="inferred from homology"/>
<sequence length="429" mass="45164">MPIIEQVGAREILDSRGNPTVEVELALTDGTFARAAVPSGASTGEHEAVELRDGGSRYGGKGVDKAVQAVLDDIAPAVIGMSADDQRLIDQALLDLDGTPDKSRLGANAILGVSLAVSKAAAESAGLPLFRYLGGPNAHILPVPMMNILNGGAHADTGVDVQEFMVAPIGAPSFKEALRWGAEVYHSLKSVLKKQGLSTGLGDEGGFAPDVAGTKAALDLISSAIEAAGFKLGTDVTLALDVAATEFYTEGTGYSFEKETRTAEQMAEFYASLLDAYPLVSIEDPLSEDDWDGWVSLTTQIGDRVQLVGDDLFVTNPERLEEGIERGAANALLVKVNQIGTLTETLDAVALAHNSGYRTMMSHRSGETEDTTIADLAVAVGSGQIKTGAPARSERVAKYNQLLRIEETLGDAARYAGDLAFPRFALETK</sequence>
<keyword id="KW-0963">Cytoplasm</keyword>
<keyword id="KW-0324">Glycolysis</keyword>
<keyword id="KW-0456">Lyase</keyword>
<keyword id="KW-0460">Magnesium</keyword>
<keyword id="KW-0479">Metal-binding</keyword>
<keyword id="KW-0964">Secreted</keyword>
<reference key="1">
    <citation type="submission" date="2007-02" db="EMBL/GenBank/DDBJ databases">
        <title>Complete sequence of Mycobacterium sp. JLS.</title>
        <authorList>
            <consortium name="US DOE Joint Genome Institute"/>
            <person name="Copeland A."/>
            <person name="Lucas S."/>
            <person name="Lapidus A."/>
            <person name="Barry K."/>
            <person name="Detter J.C."/>
            <person name="Glavina del Rio T."/>
            <person name="Hammon N."/>
            <person name="Israni S."/>
            <person name="Dalin E."/>
            <person name="Tice H."/>
            <person name="Pitluck S."/>
            <person name="Chain P."/>
            <person name="Malfatti S."/>
            <person name="Shin M."/>
            <person name="Vergez L."/>
            <person name="Schmutz J."/>
            <person name="Larimer F."/>
            <person name="Land M."/>
            <person name="Hauser L."/>
            <person name="Kyrpides N."/>
            <person name="Mikhailova N."/>
            <person name="Miller C.D."/>
            <person name="Anderson A.J."/>
            <person name="Sims R.C."/>
            <person name="Richardson P."/>
        </authorList>
    </citation>
    <scope>NUCLEOTIDE SEQUENCE [LARGE SCALE GENOMIC DNA]</scope>
    <source>
        <strain>JLS</strain>
    </source>
</reference>
<comment type="function">
    <text evidence="1">Catalyzes the reversible conversion of 2-phosphoglycerate (2-PG) into phosphoenolpyruvate (PEP). It is essential for the degradation of carbohydrates via glycolysis.</text>
</comment>
<comment type="catalytic activity">
    <reaction evidence="1">
        <text>(2R)-2-phosphoglycerate = phosphoenolpyruvate + H2O</text>
        <dbReference type="Rhea" id="RHEA:10164"/>
        <dbReference type="ChEBI" id="CHEBI:15377"/>
        <dbReference type="ChEBI" id="CHEBI:58289"/>
        <dbReference type="ChEBI" id="CHEBI:58702"/>
        <dbReference type="EC" id="4.2.1.11"/>
    </reaction>
</comment>
<comment type="cofactor">
    <cofactor evidence="1">
        <name>Mg(2+)</name>
        <dbReference type="ChEBI" id="CHEBI:18420"/>
    </cofactor>
    <text evidence="1">Binds a second Mg(2+) ion via substrate during catalysis.</text>
</comment>
<comment type="pathway">
    <text evidence="1">Carbohydrate degradation; glycolysis; pyruvate from D-glyceraldehyde 3-phosphate: step 4/5.</text>
</comment>
<comment type="subcellular location">
    <subcellularLocation>
        <location evidence="1">Cytoplasm</location>
    </subcellularLocation>
    <subcellularLocation>
        <location evidence="1">Secreted</location>
    </subcellularLocation>
    <subcellularLocation>
        <location evidence="1">Cell surface</location>
    </subcellularLocation>
    <text evidence="1">Fractions of enolase are present in both the cytoplasm and on the cell surface.</text>
</comment>
<comment type="similarity">
    <text evidence="1">Belongs to the enolase family.</text>
</comment>
<accession>A3Q5F7</accession>
<gene>
    <name evidence="1" type="primary">eno</name>
    <name type="ordered locus">Mjls_4619</name>
</gene>
<protein>
    <recommendedName>
        <fullName evidence="1">Enolase</fullName>
        <ecNumber evidence="1">4.2.1.11</ecNumber>
    </recommendedName>
    <alternativeName>
        <fullName evidence="1">2-phospho-D-glycerate hydro-lyase</fullName>
    </alternativeName>
    <alternativeName>
        <fullName evidence="1">2-phosphoglycerate dehydratase</fullName>
    </alternativeName>
</protein>
<evidence type="ECO:0000255" key="1">
    <source>
        <dbReference type="HAMAP-Rule" id="MF_00318"/>
    </source>
</evidence>